<protein>
    <recommendedName>
        <fullName evidence="1">Ribosomal RNA large subunit methyltransferase H</fullName>
        <ecNumber evidence="1">2.1.1.177</ecNumber>
    </recommendedName>
    <alternativeName>
        <fullName evidence="1">23S rRNA (pseudouridine1915-N3)-methyltransferase</fullName>
    </alternativeName>
    <alternativeName>
        <fullName evidence="1">23S rRNA m3Psi1915 methyltransferase</fullName>
    </alternativeName>
    <alternativeName>
        <fullName evidence="1">rRNA (pseudouridine-N3-)-methyltransferase RlmH</fullName>
    </alternativeName>
</protein>
<evidence type="ECO:0000255" key="1">
    <source>
        <dbReference type="HAMAP-Rule" id="MF_00658"/>
    </source>
</evidence>
<gene>
    <name evidence="1" type="primary">rlmH</name>
    <name type="ordered locus">swp_3921</name>
</gene>
<comment type="function">
    <text evidence="1">Specifically methylates the pseudouridine at position 1915 (m3Psi1915) in 23S rRNA.</text>
</comment>
<comment type="catalytic activity">
    <reaction evidence="1">
        <text>pseudouridine(1915) in 23S rRNA + S-adenosyl-L-methionine = N(3)-methylpseudouridine(1915) in 23S rRNA + S-adenosyl-L-homocysteine + H(+)</text>
        <dbReference type="Rhea" id="RHEA:42752"/>
        <dbReference type="Rhea" id="RHEA-COMP:10221"/>
        <dbReference type="Rhea" id="RHEA-COMP:10222"/>
        <dbReference type="ChEBI" id="CHEBI:15378"/>
        <dbReference type="ChEBI" id="CHEBI:57856"/>
        <dbReference type="ChEBI" id="CHEBI:59789"/>
        <dbReference type="ChEBI" id="CHEBI:65314"/>
        <dbReference type="ChEBI" id="CHEBI:74486"/>
        <dbReference type="EC" id="2.1.1.177"/>
    </reaction>
</comment>
<comment type="subunit">
    <text evidence="1">Homodimer.</text>
</comment>
<comment type="subcellular location">
    <subcellularLocation>
        <location evidence="1">Cytoplasm</location>
    </subcellularLocation>
</comment>
<comment type="similarity">
    <text evidence="1">Belongs to the RNA methyltransferase RlmH family.</text>
</comment>
<name>RLMH_SHEPW</name>
<accession>B8CSG9</accession>
<reference key="1">
    <citation type="journal article" date="2008" name="PLoS ONE">
        <title>Environmental adaptation: genomic analysis of the piezotolerant and psychrotolerant deep-sea iron reducing bacterium Shewanella piezotolerans WP3.</title>
        <authorList>
            <person name="Wang F."/>
            <person name="Wang J."/>
            <person name="Jian H."/>
            <person name="Zhang B."/>
            <person name="Li S."/>
            <person name="Wang F."/>
            <person name="Zeng X."/>
            <person name="Gao L."/>
            <person name="Bartlett D.H."/>
            <person name="Yu J."/>
            <person name="Hu S."/>
            <person name="Xiao X."/>
        </authorList>
    </citation>
    <scope>NUCLEOTIDE SEQUENCE [LARGE SCALE GENOMIC DNA]</scope>
    <source>
        <strain>WP3 / JCM 13877</strain>
    </source>
</reference>
<proteinExistence type="inferred from homology"/>
<keyword id="KW-0963">Cytoplasm</keyword>
<keyword id="KW-0489">Methyltransferase</keyword>
<keyword id="KW-0698">rRNA processing</keyword>
<keyword id="KW-0949">S-adenosyl-L-methionine</keyword>
<keyword id="KW-0808">Transferase</keyword>
<dbReference type="EC" id="2.1.1.177" evidence="1"/>
<dbReference type="EMBL" id="CP000472">
    <property type="protein sequence ID" value="ACJ30595.1"/>
    <property type="molecule type" value="Genomic_DNA"/>
</dbReference>
<dbReference type="RefSeq" id="WP_020913937.1">
    <property type="nucleotide sequence ID" value="NC_011566.1"/>
</dbReference>
<dbReference type="SMR" id="B8CSG9"/>
<dbReference type="STRING" id="225849.swp_3921"/>
<dbReference type="KEGG" id="swp:swp_3921"/>
<dbReference type="eggNOG" id="COG1576">
    <property type="taxonomic scope" value="Bacteria"/>
</dbReference>
<dbReference type="HOGENOM" id="CLU_100552_1_0_6"/>
<dbReference type="OrthoDB" id="9806643at2"/>
<dbReference type="Proteomes" id="UP000000753">
    <property type="component" value="Chromosome"/>
</dbReference>
<dbReference type="GO" id="GO:0005737">
    <property type="term" value="C:cytoplasm"/>
    <property type="evidence" value="ECO:0007669"/>
    <property type="project" value="UniProtKB-SubCell"/>
</dbReference>
<dbReference type="GO" id="GO:0070038">
    <property type="term" value="F:rRNA (pseudouridine-N3-)-methyltransferase activity"/>
    <property type="evidence" value="ECO:0007669"/>
    <property type="project" value="UniProtKB-UniRule"/>
</dbReference>
<dbReference type="CDD" id="cd18081">
    <property type="entry name" value="RlmH-like"/>
    <property type="match status" value="1"/>
</dbReference>
<dbReference type="Gene3D" id="3.40.1280.10">
    <property type="match status" value="1"/>
</dbReference>
<dbReference type="HAMAP" id="MF_00658">
    <property type="entry name" value="23SrRNA_methyltr_H"/>
    <property type="match status" value="1"/>
</dbReference>
<dbReference type="InterPro" id="IPR029028">
    <property type="entry name" value="Alpha/beta_knot_MTases"/>
</dbReference>
<dbReference type="InterPro" id="IPR003742">
    <property type="entry name" value="RlmH-like"/>
</dbReference>
<dbReference type="InterPro" id="IPR029026">
    <property type="entry name" value="tRNA_m1G_MTases_N"/>
</dbReference>
<dbReference type="NCBIfam" id="NF000984">
    <property type="entry name" value="PRK00103.1-1"/>
    <property type="match status" value="1"/>
</dbReference>
<dbReference type="NCBIfam" id="NF000986">
    <property type="entry name" value="PRK00103.1-4"/>
    <property type="match status" value="1"/>
</dbReference>
<dbReference type="NCBIfam" id="TIGR00246">
    <property type="entry name" value="tRNA_RlmH_YbeA"/>
    <property type="match status" value="1"/>
</dbReference>
<dbReference type="PANTHER" id="PTHR33603">
    <property type="entry name" value="METHYLTRANSFERASE"/>
    <property type="match status" value="1"/>
</dbReference>
<dbReference type="PANTHER" id="PTHR33603:SF1">
    <property type="entry name" value="RIBOSOMAL RNA LARGE SUBUNIT METHYLTRANSFERASE H"/>
    <property type="match status" value="1"/>
</dbReference>
<dbReference type="Pfam" id="PF02590">
    <property type="entry name" value="SPOUT_MTase"/>
    <property type="match status" value="1"/>
</dbReference>
<dbReference type="PIRSF" id="PIRSF004505">
    <property type="entry name" value="MT_bac"/>
    <property type="match status" value="1"/>
</dbReference>
<dbReference type="SUPFAM" id="SSF75217">
    <property type="entry name" value="alpha/beta knot"/>
    <property type="match status" value="1"/>
</dbReference>
<feature type="chain" id="PRO_1000131235" description="Ribosomal RNA large subunit methyltransferase H">
    <location>
        <begin position="1"/>
        <end position="156"/>
    </location>
</feature>
<feature type="binding site" evidence="1">
    <location>
        <position position="73"/>
    </location>
    <ligand>
        <name>S-adenosyl-L-methionine</name>
        <dbReference type="ChEBI" id="CHEBI:59789"/>
    </ligand>
</feature>
<feature type="binding site" evidence="1">
    <location>
        <position position="104"/>
    </location>
    <ligand>
        <name>S-adenosyl-L-methionine</name>
        <dbReference type="ChEBI" id="CHEBI:59789"/>
    </ligand>
</feature>
<feature type="binding site" evidence="1">
    <location>
        <begin position="123"/>
        <end position="128"/>
    </location>
    <ligand>
        <name>S-adenosyl-L-methionine</name>
        <dbReference type="ChEBI" id="CHEBI:59789"/>
    </ligand>
</feature>
<sequence>MKIQLVAVGTRMPDWVETGFKEYQRRFPRDMALELIEIPAGKRGKNADIARILQKEGELMLAAIPKGNHIVSLDLPGKNLKTPELAQQMNKWLLDGRDVSLLIGGPEGLSPDCKKAAAQSWCLSALTLPHPLVRVIVAESLYRGWSINNNHPYHRE</sequence>
<organism>
    <name type="scientific">Shewanella piezotolerans (strain WP3 / JCM 13877)</name>
    <dbReference type="NCBI Taxonomy" id="225849"/>
    <lineage>
        <taxon>Bacteria</taxon>
        <taxon>Pseudomonadati</taxon>
        <taxon>Pseudomonadota</taxon>
        <taxon>Gammaproteobacteria</taxon>
        <taxon>Alteromonadales</taxon>
        <taxon>Shewanellaceae</taxon>
        <taxon>Shewanella</taxon>
    </lineage>
</organism>